<proteinExistence type="inferred from homology"/>
<keyword id="KW-0963">Cytoplasm</keyword>
<keyword id="KW-0255">Endonuclease</keyword>
<keyword id="KW-0378">Hydrolase</keyword>
<keyword id="KW-0540">Nuclease</keyword>
<keyword id="KW-1185">Reference proteome</keyword>
<keyword id="KW-0819">tRNA processing</keyword>
<dbReference type="EC" id="3.1.26.5" evidence="1"/>
<dbReference type="EMBL" id="CP001463">
    <property type="protein sequence ID" value="ACS89363.1"/>
    <property type="molecule type" value="Genomic_DNA"/>
</dbReference>
<dbReference type="SMR" id="C6A168"/>
<dbReference type="STRING" id="604354.TSIB_0297"/>
<dbReference type="KEGG" id="tsi:TSIB_0297"/>
<dbReference type="eggNOG" id="arCOG00784">
    <property type="taxonomic scope" value="Archaea"/>
</dbReference>
<dbReference type="HOGENOM" id="CLU_107020_1_0_2"/>
<dbReference type="OrthoDB" id="39019at2157"/>
<dbReference type="Proteomes" id="UP000009079">
    <property type="component" value="Chromosome"/>
</dbReference>
<dbReference type="GO" id="GO:0005737">
    <property type="term" value="C:cytoplasm"/>
    <property type="evidence" value="ECO:0007669"/>
    <property type="project" value="UniProtKB-SubCell"/>
</dbReference>
<dbReference type="GO" id="GO:0000172">
    <property type="term" value="C:ribonuclease MRP complex"/>
    <property type="evidence" value="ECO:0007669"/>
    <property type="project" value="InterPro"/>
</dbReference>
<dbReference type="GO" id="GO:0030677">
    <property type="term" value="C:ribonuclease P complex"/>
    <property type="evidence" value="ECO:0007669"/>
    <property type="project" value="UniProtKB-UniRule"/>
</dbReference>
<dbReference type="GO" id="GO:0004526">
    <property type="term" value="F:ribonuclease P activity"/>
    <property type="evidence" value="ECO:0007669"/>
    <property type="project" value="UniProtKB-UniRule"/>
</dbReference>
<dbReference type="GO" id="GO:0033204">
    <property type="term" value="F:ribonuclease P RNA binding"/>
    <property type="evidence" value="ECO:0007669"/>
    <property type="project" value="InterPro"/>
</dbReference>
<dbReference type="GO" id="GO:0006364">
    <property type="term" value="P:rRNA processing"/>
    <property type="evidence" value="ECO:0007669"/>
    <property type="project" value="TreeGrafter"/>
</dbReference>
<dbReference type="GO" id="GO:0001682">
    <property type="term" value="P:tRNA 5'-leader removal"/>
    <property type="evidence" value="ECO:0007669"/>
    <property type="project" value="UniProtKB-UniRule"/>
</dbReference>
<dbReference type="Gene3D" id="2.30.30.210">
    <property type="entry name" value="Ribonuclease P/MRP, subunit p29"/>
    <property type="match status" value="1"/>
</dbReference>
<dbReference type="HAMAP" id="MF_00754">
    <property type="entry name" value="RNase_P_1"/>
    <property type="match status" value="1"/>
</dbReference>
<dbReference type="InterPro" id="IPR016848">
    <property type="entry name" value="RNase_P/MRP_Rpp29-subunit"/>
</dbReference>
<dbReference type="InterPro" id="IPR036980">
    <property type="entry name" value="RNase_P/MRP_Rpp29_sf"/>
</dbReference>
<dbReference type="InterPro" id="IPR023538">
    <property type="entry name" value="RNP1"/>
</dbReference>
<dbReference type="InterPro" id="IPR023534">
    <property type="entry name" value="Rof/RNase_P-like"/>
</dbReference>
<dbReference type="InterPro" id="IPR002730">
    <property type="entry name" value="Rpp29/RNP1"/>
</dbReference>
<dbReference type="PANTHER" id="PTHR13348:SF0">
    <property type="entry name" value="RIBONUCLEASE P PROTEIN SUBUNIT P29"/>
    <property type="match status" value="1"/>
</dbReference>
<dbReference type="PANTHER" id="PTHR13348">
    <property type="entry name" value="RIBONUCLEASE P SUBUNIT P29"/>
    <property type="match status" value="1"/>
</dbReference>
<dbReference type="Pfam" id="PF01868">
    <property type="entry name" value="RNase_P-MRP_p29"/>
    <property type="match status" value="1"/>
</dbReference>
<dbReference type="SMART" id="SM00538">
    <property type="entry name" value="POP4"/>
    <property type="match status" value="1"/>
</dbReference>
<dbReference type="SUPFAM" id="SSF101744">
    <property type="entry name" value="Rof/RNase P subunit-like"/>
    <property type="match status" value="1"/>
</dbReference>
<gene>
    <name evidence="1" type="primary">rnp1</name>
    <name type="ordered locus">TSIB_0297</name>
</gene>
<protein>
    <recommendedName>
        <fullName evidence="1">Ribonuclease P protein component 1</fullName>
        <shortName evidence="1">RNase P component 1</shortName>
        <ecNumber evidence="1">3.1.26.5</ecNumber>
    </recommendedName>
    <alternativeName>
        <fullName evidence="1">Rpp29</fullName>
    </alternativeName>
</protein>
<feature type="chain" id="PRO_1000212852" description="Ribonuclease P protein component 1">
    <location>
        <begin position="1"/>
        <end position="122"/>
    </location>
</feature>
<sequence length="122" mass="14221">MWRNSQKWKNRASRRPQRKGEALIDKLWIFRGLDRGRMTKKTLLMHELIGLKVKVVKSSHPGLIGIEGYVIDETKNTLTILGTKVWAIPKIVAEFEFEVGDKKIRIKGEELVGRPEMRLKKR</sequence>
<comment type="function">
    <text evidence="1">Part of ribonuclease P, a protein complex that generates mature tRNA molecules by cleaving their 5'-ends.</text>
</comment>
<comment type="catalytic activity">
    <reaction evidence="1">
        <text>Endonucleolytic cleavage of RNA, removing 5'-extranucleotides from tRNA precursor.</text>
        <dbReference type="EC" id="3.1.26.5"/>
    </reaction>
</comment>
<comment type="subunit">
    <text evidence="1">Consists of a catalytic RNA component and at least 4-5 protein subunits.</text>
</comment>
<comment type="subcellular location">
    <subcellularLocation>
        <location evidence="1">Cytoplasm</location>
    </subcellularLocation>
</comment>
<comment type="similarity">
    <text evidence="1">Belongs to the eukaryotic/archaeal RNase P protein component 1 family.</text>
</comment>
<accession>C6A168</accession>
<name>RNP1_THESM</name>
<evidence type="ECO:0000255" key="1">
    <source>
        <dbReference type="HAMAP-Rule" id="MF_00754"/>
    </source>
</evidence>
<organism>
    <name type="scientific">Thermococcus sibiricus (strain DSM 12597 / MM 739)</name>
    <dbReference type="NCBI Taxonomy" id="604354"/>
    <lineage>
        <taxon>Archaea</taxon>
        <taxon>Methanobacteriati</taxon>
        <taxon>Methanobacteriota</taxon>
        <taxon>Thermococci</taxon>
        <taxon>Thermococcales</taxon>
        <taxon>Thermococcaceae</taxon>
        <taxon>Thermococcus</taxon>
    </lineage>
</organism>
<reference key="1">
    <citation type="journal article" date="2009" name="Appl. Environ. Microbiol.">
        <title>Metabolic versatility and indigenous origin of the archaeon Thermococcus sibiricus, isolated from a siberian oil reservoir, as revealed by genome analysis.</title>
        <authorList>
            <person name="Mardanov A.V."/>
            <person name="Ravin N.V."/>
            <person name="Svetlitchnyi V.A."/>
            <person name="Beletsky A.V."/>
            <person name="Miroshnichenko M.L."/>
            <person name="Bonch-Osmolovskaya E.A."/>
            <person name="Skryabin K.G."/>
        </authorList>
    </citation>
    <scope>NUCLEOTIDE SEQUENCE [LARGE SCALE GENOMIC DNA]</scope>
    <source>
        <strain>DSM 12597 / MM 739</strain>
    </source>
</reference>